<evidence type="ECO:0000255" key="1"/>
<evidence type="ECO:0000256" key="2">
    <source>
        <dbReference type="SAM" id="MobiDB-lite"/>
    </source>
</evidence>
<evidence type="ECO:0000305" key="3"/>
<feature type="transit peptide" description="Chloroplast" evidence="1">
    <location>
        <begin position="1"/>
        <end position="28"/>
    </location>
</feature>
<feature type="chain" id="PRO_0000363561" description="Pentatricopeptide repeat-containing protein At5g48730, chloroplastic">
    <location>
        <begin position="29"/>
        <end position="508"/>
    </location>
</feature>
<feature type="repeat" description="PPR 1">
    <location>
        <begin position="149"/>
        <end position="183"/>
    </location>
</feature>
<feature type="repeat" description="PPR 2">
    <location>
        <begin position="184"/>
        <end position="214"/>
    </location>
</feature>
<feature type="repeat" description="PPR 3">
    <location>
        <begin position="220"/>
        <end position="254"/>
    </location>
</feature>
<feature type="repeat" description="PPR 4">
    <location>
        <begin position="255"/>
        <end position="290"/>
    </location>
</feature>
<feature type="repeat" description="PPR 5">
    <location>
        <begin position="291"/>
        <end position="325"/>
    </location>
</feature>
<feature type="repeat" description="PPR 6">
    <location>
        <begin position="326"/>
        <end position="360"/>
    </location>
</feature>
<feature type="repeat" description="PPR 7">
    <location>
        <begin position="361"/>
        <end position="395"/>
    </location>
</feature>
<feature type="repeat" description="PPR 8">
    <location>
        <begin position="396"/>
        <end position="430"/>
    </location>
</feature>
<feature type="repeat" description="PPR 9">
    <location>
        <begin position="431"/>
        <end position="465"/>
    </location>
</feature>
<feature type="repeat" description="PPR 10">
    <location>
        <begin position="466"/>
        <end position="500"/>
    </location>
</feature>
<feature type="region of interest" description="Disordered" evidence="2">
    <location>
        <begin position="1"/>
        <end position="22"/>
    </location>
</feature>
<feature type="compositionally biased region" description="Polar residues" evidence="2">
    <location>
        <begin position="1"/>
        <end position="10"/>
    </location>
</feature>
<organism>
    <name type="scientific">Arabidopsis thaliana</name>
    <name type="common">Mouse-ear cress</name>
    <dbReference type="NCBI Taxonomy" id="3702"/>
    <lineage>
        <taxon>Eukaryota</taxon>
        <taxon>Viridiplantae</taxon>
        <taxon>Streptophyta</taxon>
        <taxon>Embryophyta</taxon>
        <taxon>Tracheophyta</taxon>
        <taxon>Spermatophyta</taxon>
        <taxon>Magnoliopsida</taxon>
        <taxon>eudicotyledons</taxon>
        <taxon>Gunneridae</taxon>
        <taxon>Pentapetalae</taxon>
        <taxon>rosids</taxon>
        <taxon>malvids</taxon>
        <taxon>Brassicales</taxon>
        <taxon>Brassicaceae</taxon>
        <taxon>Camelineae</taxon>
        <taxon>Arabidopsis</taxon>
    </lineage>
</organism>
<gene>
    <name type="ordered locus">At5g48730</name>
    <name type="ORF">K24G6.6</name>
</gene>
<dbReference type="EMBL" id="AB012242">
    <property type="protein sequence ID" value="BAB09426.1"/>
    <property type="status" value="ALT_SEQ"/>
    <property type="molecule type" value="Genomic_DNA"/>
</dbReference>
<dbReference type="EMBL" id="CP002688">
    <property type="protein sequence ID" value="AED95717.1"/>
    <property type="molecule type" value="Genomic_DNA"/>
</dbReference>
<dbReference type="RefSeq" id="NP_199684.2">
    <property type="nucleotide sequence ID" value="NM_124250.4"/>
</dbReference>
<dbReference type="SMR" id="Q9FKC3"/>
<dbReference type="FunCoup" id="Q9FKC3">
    <property type="interactions" value="496"/>
</dbReference>
<dbReference type="STRING" id="3702.Q9FKC3"/>
<dbReference type="PaxDb" id="3702-AT5G48730.1"/>
<dbReference type="ProteomicsDB" id="249305"/>
<dbReference type="EnsemblPlants" id="AT5G48730.1">
    <property type="protein sequence ID" value="AT5G48730.1"/>
    <property type="gene ID" value="AT5G48730"/>
</dbReference>
<dbReference type="GeneID" id="834931"/>
<dbReference type="Gramene" id="AT5G48730.1">
    <property type="protein sequence ID" value="AT5G48730.1"/>
    <property type="gene ID" value="AT5G48730"/>
</dbReference>
<dbReference type="KEGG" id="ath:AT5G48730"/>
<dbReference type="Araport" id="AT5G48730"/>
<dbReference type="TAIR" id="AT5G48730"/>
<dbReference type="eggNOG" id="KOG4197">
    <property type="taxonomic scope" value="Eukaryota"/>
</dbReference>
<dbReference type="HOGENOM" id="CLU_002706_49_6_1"/>
<dbReference type="InParanoid" id="Q9FKC3"/>
<dbReference type="OMA" id="NHESYTA"/>
<dbReference type="OrthoDB" id="185373at2759"/>
<dbReference type="PhylomeDB" id="Q9FKC3"/>
<dbReference type="PRO" id="PR:Q9FKC3"/>
<dbReference type="Proteomes" id="UP000006548">
    <property type="component" value="Chromosome 5"/>
</dbReference>
<dbReference type="ExpressionAtlas" id="Q9FKC3">
    <property type="expression patterns" value="baseline and differential"/>
</dbReference>
<dbReference type="GO" id="GO:0009507">
    <property type="term" value="C:chloroplast"/>
    <property type="evidence" value="ECO:0007669"/>
    <property type="project" value="UniProtKB-SubCell"/>
</dbReference>
<dbReference type="GO" id="GO:0003729">
    <property type="term" value="F:mRNA binding"/>
    <property type="evidence" value="ECO:0007669"/>
    <property type="project" value="InterPro"/>
</dbReference>
<dbReference type="Gene3D" id="1.25.40.10">
    <property type="entry name" value="Tetratricopeptide repeat domain"/>
    <property type="match status" value="3"/>
</dbReference>
<dbReference type="InterPro" id="IPR002885">
    <property type="entry name" value="Pentatricopeptide_rpt"/>
</dbReference>
<dbReference type="InterPro" id="IPR044179">
    <property type="entry name" value="PPR5-like"/>
</dbReference>
<dbReference type="InterPro" id="IPR011990">
    <property type="entry name" value="TPR-like_helical_dom_sf"/>
</dbReference>
<dbReference type="NCBIfam" id="TIGR00756">
    <property type="entry name" value="PPR"/>
    <property type="match status" value="6"/>
</dbReference>
<dbReference type="PANTHER" id="PTHR47874">
    <property type="entry name" value="EXPRESSED PROTEIN"/>
    <property type="match status" value="1"/>
</dbReference>
<dbReference type="PANTHER" id="PTHR47874:SF6">
    <property type="entry name" value="PENTATRICOPEPTIDE REPEAT-CONTAINING PROTEIN"/>
    <property type="match status" value="1"/>
</dbReference>
<dbReference type="Pfam" id="PF01535">
    <property type="entry name" value="PPR"/>
    <property type="match status" value="1"/>
</dbReference>
<dbReference type="Pfam" id="PF13041">
    <property type="entry name" value="PPR_2"/>
    <property type="match status" value="2"/>
</dbReference>
<dbReference type="Pfam" id="PF13812">
    <property type="entry name" value="PPR_3"/>
    <property type="match status" value="2"/>
</dbReference>
<dbReference type="SUPFAM" id="SSF48452">
    <property type="entry name" value="TPR-like"/>
    <property type="match status" value="1"/>
</dbReference>
<dbReference type="PROSITE" id="PS51375">
    <property type="entry name" value="PPR"/>
    <property type="match status" value="10"/>
</dbReference>
<protein>
    <recommendedName>
        <fullName>Pentatricopeptide repeat-containing protein At5g48730, chloroplastic</fullName>
    </recommendedName>
</protein>
<sequence>MVSLSTSTSHAPPLPTNRRTAERTFTVRCISISPREPNYAITSDKSNNTSLSLRETRQSKWLINAEDVNERDSKEIKEDKNTKIASRKAISIILRREATKSIIEKKKGSKKLLPRTVLESLHERITALRWESAIQVFELLREQLWYKPNVGIYVKLIVMLGKCKQPEKAHELFQEMINEGCVVNHEVYTALVSAYSRSGRFDAAFTLLERMKSSHNCQPDVHTYSILIKSFLQVFAFDKVQDLLSDMRRQGIRPNTITYNTLIDAYGKAKMFVEMESTLIQMLGEDDCKPDSWTMNSTLRAFGGNGQIEMMENCYEKFQSSGIEPNIRTFNILLDSYGKSGNYKKMSAVMEYMQKYHYSWTIVTYNVVIDAFGRAGDLKQMEYLFRLMQSERIFPSCVTLCSLVRAYGRASKADKIGGVLRFIENSDIRLDLVFFNCLVDAYGRMEKFAEMKGVLELMEKKGFKPDKITYRTMVKAYRISGMTTHVKELHGVVESVGEAQVVVKKPDF</sequence>
<keyword id="KW-0150">Chloroplast</keyword>
<keyword id="KW-0934">Plastid</keyword>
<keyword id="KW-1185">Reference proteome</keyword>
<keyword id="KW-0677">Repeat</keyword>
<keyword id="KW-0809">Transit peptide</keyword>
<comment type="subcellular location">
    <subcellularLocation>
        <location evidence="3">Plastid</location>
        <location evidence="3">Chloroplast</location>
    </subcellularLocation>
</comment>
<comment type="similarity">
    <text evidence="3">Belongs to the PPR family. P subfamily.</text>
</comment>
<comment type="sequence caution" evidence="3">
    <conflict type="erroneous gene model prediction">
        <sequence resource="EMBL-CDS" id="BAB09426"/>
    </conflict>
</comment>
<comment type="online information" name="Pentatricopeptide repeat proteins">
    <link uri="https://ppr.plantenergy.uwa.edu.au"/>
</comment>
<proteinExistence type="evidence at transcript level"/>
<name>PP424_ARATH</name>
<accession>Q9FKC3</accession>
<reference key="1">
    <citation type="journal article" date="1998" name="DNA Res.">
        <title>Structural analysis of Arabidopsis thaliana chromosome 5. VI. Sequence features of the regions of 1,367,185 bp covered by 19 physically assigned P1 and TAC clones.</title>
        <authorList>
            <person name="Kotani H."/>
            <person name="Nakamura Y."/>
            <person name="Sato S."/>
            <person name="Asamizu E."/>
            <person name="Kaneko T."/>
            <person name="Miyajima N."/>
            <person name="Tabata S."/>
        </authorList>
    </citation>
    <scope>NUCLEOTIDE SEQUENCE [LARGE SCALE GENOMIC DNA]</scope>
    <source>
        <strain>cv. Columbia</strain>
    </source>
</reference>
<reference key="2">
    <citation type="journal article" date="2017" name="Plant J.">
        <title>Araport11: a complete reannotation of the Arabidopsis thaliana reference genome.</title>
        <authorList>
            <person name="Cheng C.Y."/>
            <person name="Krishnakumar V."/>
            <person name="Chan A.P."/>
            <person name="Thibaud-Nissen F."/>
            <person name="Schobel S."/>
            <person name="Town C.D."/>
        </authorList>
    </citation>
    <scope>GENOME REANNOTATION</scope>
    <source>
        <strain>cv. Columbia</strain>
    </source>
</reference>
<reference key="3">
    <citation type="journal article" date="2004" name="Plant Cell">
        <title>Genome-wide analysis of Arabidopsis pentatricopeptide repeat proteins reveals their essential role in organelle biogenesis.</title>
        <authorList>
            <person name="Lurin C."/>
            <person name="Andres C."/>
            <person name="Aubourg S."/>
            <person name="Bellaoui M."/>
            <person name="Bitton F."/>
            <person name="Bruyere C."/>
            <person name="Caboche M."/>
            <person name="Debast C."/>
            <person name="Gualberto J."/>
            <person name="Hoffmann B."/>
            <person name="Lecharny A."/>
            <person name="Le Ret M."/>
            <person name="Martin-Magniette M.-L."/>
            <person name="Mireau H."/>
            <person name="Peeters N."/>
            <person name="Renou J.-P."/>
            <person name="Szurek B."/>
            <person name="Taconnat L."/>
            <person name="Small I."/>
        </authorList>
    </citation>
    <scope>GENE FAMILY</scope>
</reference>